<sequence>MKYRDLREFIALLEQRGELKRIQQSIDPYLEMTEIADRTLRVGGPALLFENPKGYDIPVLCNLFGTPQRVALGMGQEEVGALRDVGKLLAFLKEPDPPKGFRDLVEKLPQFKQILNMPTKRLSKAPCQEQVLQGDDVDLATLPVMHCWPQDVAPLVSWGLTVTRGPCKSRQNLGIYRQQVLGKNKLIMRWLSHRGGALDFQDWCQAHPGERFPVAVALGADPATLLAAVTPVPDSLSEYAFAGLLRGHKSEVVKCLSCDLEVPASAEIVLEGYIEPGETAPEGPYGDHTGYYNEVERFPVFTVTHLTQRDRPIYHSTYTGRPPDEPAVLGLALNEVFVPLLQKQFPEIVDFYLPPEGCSYRMAVVTMKKQYPGHAKRVMMGVWSFLRQFMYTKFVIVCDDDINARDWQDVIWALTTRMDPARDTLLIENTPIDYLDFASPVSGLGSKMGLDATNKWPGETQREWGHPIVMDEAVRARVDTLWNELDIFANDKDAQ</sequence>
<keyword id="KW-1003">Cell membrane</keyword>
<keyword id="KW-0210">Decarboxylase</keyword>
<keyword id="KW-0285">Flavoprotein</keyword>
<keyword id="KW-0288">FMN</keyword>
<keyword id="KW-0456">Lyase</keyword>
<keyword id="KW-0464">Manganese</keyword>
<keyword id="KW-0472">Membrane</keyword>
<keyword id="KW-0479">Metal-binding</keyword>
<keyword id="KW-0831">Ubiquinone biosynthesis</keyword>
<protein>
    <recommendedName>
        <fullName evidence="1">3-octaprenyl-4-hydroxybenzoate carboxy-lyase</fullName>
        <ecNumber evidence="1">4.1.1.98</ecNumber>
    </recommendedName>
    <alternativeName>
        <fullName evidence="1">Polyprenyl p-hydroxybenzoate decarboxylase</fullName>
    </alternativeName>
</protein>
<proteinExistence type="inferred from homology"/>
<gene>
    <name evidence="1" type="primary">ubiD</name>
    <name type="ordered locus">NT01EI_0150</name>
</gene>
<name>UBID_EDWI9</name>
<reference key="1">
    <citation type="submission" date="2009-03" db="EMBL/GenBank/DDBJ databases">
        <title>Complete genome sequence of Edwardsiella ictaluri 93-146.</title>
        <authorList>
            <person name="Williams M.L."/>
            <person name="Gillaspy A.F."/>
            <person name="Dyer D.W."/>
            <person name="Thune R.L."/>
            <person name="Waldbieser G.C."/>
            <person name="Schuster S.C."/>
            <person name="Gipson J."/>
            <person name="Zaitshik J."/>
            <person name="Landry C."/>
            <person name="Lawrence M.L."/>
        </authorList>
    </citation>
    <scope>NUCLEOTIDE SEQUENCE [LARGE SCALE GENOMIC DNA]</scope>
    <source>
        <strain>93-146</strain>
    </source>
</reference>
<organism>
    <name type="scientific">Edwardsiella ictaluri (strain 93-146)</name>
    <dbReference type="NCBI Taxonomy" id="634503"/>
    <lineage>
        <taxon>Bacteria</taxon>
        <taxon>Pseudomonadati</taxon>
        <taxon>Pseudomonadota</taxon>
        <taxon>Gammaproteobacteria</taxon>
        <taxon>Enterobacterales</taxon>
        <taxon>Hafniaceae</taxon>
        <taxon>Edwardsiella</taxon>
    </lineage>
</organism>
<accession>C5BCB4</accession>
<feature type="chain" id="PRO_1000215808" description="3-octaprenyl-4-hydroxybenzoate carboxy-lyase">
    <location>
        <begin position="1"/>
        <end position="495"/>
    </location>
</feature>
<feature type="active site" description="Proton donor" evidence="1">
    <location>
        <position position="287"/>
    </location>
</feature>
<feature type="binding site" evidence="1">
    <location>
        <position position="172"/>
    </location>
    <ligand>
        <name>Mn(2+)</name>
        <dbReference type="ChEBI" id="CHEBI:29035"/>
    </ligand>
</feature>
<feature type="binding site" evidence="1">
    <location>
        <begin position="175"/>
        <end position="177"/>
    </location>
    <ligand>
        <name>prenylated FMN</name>
        <dbReference type="ChEBI" id="CHEBI:87746"/>
    </ligand>
</feature>
<feature type="binding site" evidence="1">
    <location>
        <begin position="189"/>
        <end position="191"/>
    </location>
    <ligand>
        <name>prenylated FMN</name>
        <dbReference type="ChEBI" id="CHEBI:87746"/>
    </ligand>
</feature>
<feature type="binding site" evidence="1">
    <location>
        <begin position="194"/>
        <end position="195"/>
    </location>
    <ligand>
        <name>prenylated FMN</name>
        <dbReference type="ChEBI" id="CHEBI:87746"/>
    </ligand>
</feature>
<feature type="binding site" evidence="1">
    <location>
        <position position="238"/>
    </location>
    <ligand>
        <name>Mn(2+)</name>
        <dbReference type="ChEBI" id="CHEBI:29035"/>
    </ligand>
</feature>
<comment type="function">
    <text evidence="1">Catalyzes the decarboxylation of 3-octaprenyl-4-hydroxy benzoate to 2-octaprenylphenol, an intermediate step in ubiquinone biosynthesis.</text>
</comment>
<comment type="catalytic activity">
    <reaction evidence="1">
        <text>a 4-hydroxy-3-(all-trans-polyprenyl)benzoate + H(+) = a 2-(all-trans-polyprenyl)phenol + CO2</text>
        <dbReference type="Rhea" id="RHEA:41680"/>
        <dbReference type="Rhea" id="RHEA-COMP:9514"/>
        <dbReference type="Rhea" id="RHEA-COMP:9516"/>
        <dbReference type="ChEBI" id="CHEBI:1269"/>
        <dbReference type="ChEBI" id="CHEBI:15378"/>
        <dbReference type="ChEBI" id="CHEBI:16526"/>
        <dbReference type="ChEBI" id="CHEBI:78396"/>
        <dbReference type="EC" id="4.1.1.98"/>
    </reaction>
</comment>
<comment type="cofactor">
    <cofactor evidence="1">
        <name>prenylated FMN</name>
        <dbReference type="ChEBI" id="CHEBI:87746"/>
    </cofactor>
    <text evidence="1">Binds 1 prenylated FMN per subunit.</text>
</comment>
<comment type="cofactor">
    <cofactor evidence="1">
        <name>Mn(2+)</name>
        <dbReference type="ChEBI" id="CHEBI:29035"/>
    </cofactor>
</comment>
<comment type="pathway">
    <text evidence="1">Cofactor biosynthesis; ubiquinone biosynthesis.</text>
</comment>
<comment type="subunit">
    <text evidence="1">Homohexamer.</text>
</comment>
<comment type="subcellular location">
    <subcellularLocation>
        <location evidence="1">Cell membrane</location>
        <topology evidence="1">Peripheral membrane protein</topology>
    </subcellularLocation>
</comment>
<comment type="similarity">
    <text evidence="1">Belongs to the UbiD family.</text>
</comment>
<evidence type="ECO:0000255" key="1">
    <source>
        <dbReference type="HAMAP-Rule" id="MF_01636"/>
    </source>
</evidence>
<dbReference type="EC" id="4.1.1.98" evidence="1"/>
<dbReference type="EMBL" id="CP001600">
    <property type="protein sequence ID" value="ACR67405.1"/>
    <property type="molecule type" value="Genomic_DNA"/>
</dbReference>
<dbReference type="RefSeq" id="WP_015869621.1">
    <property type="nucleotide sequence ID" value="NZ_CP169062.1"/>
</dbReference>
<dbReference type="SMR" id="C5BCB4"/>
<dbReference type="STRING" id="67780.B6E78_11900"/>
<dbReference type="GeneID" id="69537257"/>
<dbReference type="KEGG" id="eic:NT01EI_0150"/>
<dbReference type="PATRIC" id="fig|634503.3.peg.141"/>
<dbReference type="HOGENOM" id="CLU_023348_4_1_6"/>
<dbReference type="OrthoDB" id="9809841at2"/>
<dbReference type="UniPathway" id="UPA00232"/>
<dbReference type="Proteomes" id="UP000001485">
    <property type="component" value="Chromosome"/>
</dbReference>
<dbReference type="GO" id="GO:0005829">
    <property type="term" value="C:cytosol"/>
    <property type="evidence" value="ECO:0007669"/>
    <property type="project" value="TreeGrafter"/>
</dbReference>
<dbReference type="GO" id="GO:0005886">
    <property type="term" value="C:plasma membrane"/>
    <property type="evidence" value="ECO:0007669"/>
    <property type="project" value="UniProtKB-SubCell"/>
</dbReference>
<dbReference type="GO" id="GO:0008694">
    <property type="term" value="F:3-octaprenyl-4-hydroxybenzoate carboxy-lyase activity"/>
    <property type="evidence" value="ECO:0007669"/>
    <property type="project" value="UniProtKB-UniRule"/>
</dbReference>
<dbReference type="GO" id="GO:0046872">
    <property type="term" value="F:metal ion binding"/>
    <property type="evidence" value="ECO:0007669"/>
    <property type="project" value="UniProtKB-KW"/>
</dbReference>
<dbReference type="GO" id="GO:0006744">
    <property type="term" value="P:ubiquinone biosynthetic process"/>
    <property type="evidence" value="ECO:0007669"/>
    <property type="project" value="UniProtKB-UniRule"/>
</dbReference>
<dbReference type="FunFam" id="1.20.5.570:FF:000001">
    <property type="entry name" value="3-octaprenyl-4-hydroxybenzoate carboxy-lyase"/>
    <property type="match status" value="1"/>
</dbReference>
<dbReference type="FunFam" id="3.40.1670.10:FF:000001">
    <property type="entry name" value="3-octaprenyl-4-hydroxybenzoate carboxy-lyase"/>
    <property type="match status" value="1"/>
</dbReference>
<dbReference type="Gene3D" id="1.20.5.570">
    <property type="entry name" value="Single helix bin"/>
    <property type="match status" value="1"/>
</dbReference>
<dbReference type="Gene3D" id="3.40.1670.10">
    <property type="entry name" value="UbiD C-terminal domain-like"/>
    <property type="match status" value="1"/>
</dbReference>
<dbReference type="HAMAP" id="MF_01636">
    <property type="entry name" value="UbiD"/>
    <property type="match status" value="1"/>
</dbReference>
<dbReference type="InterPro" id="IPR002830">
    <property type="entry name" value="UbiD"/>
</dbReference>
<dbReference type="InterPro" id="IPR049381">
    <property type="entry name" value="UbiD-like_C"/>
</dbReference>
<dbReference type="InterPro" id="IPR049383">
    <property type="entry name" value="UbiD-like_N"/>
</dbReference>
<dbReference type="InterPro" id="IPR023677">
    <property type="entry name" value="UbiD_bacteria"/>
</dbReference>
<dbReference type="InterPro" id="IPR048304">
    <property type="entry name" value="UbiD_Rift_dom"/>
</dbReference>
<dbReference type="NCBIfam" id="NF008175">
    <property type="entry name" value="PRK10922.1"/>
    <property type="match status" value="1"/>
</dbReference>
<dbReference type="NCBIfam" id="TIGR00148">
    <property type="entry name" value="UbiD family decarboxylase"/>
    <property type="match status" value="1"/>
</dbReference>
<dbReference type="PANTHER" id="PTHR30108">
    <property type="entry name" value="3-OCTAPRENYL-4-HYDROXYBENZOATE CARBOXY-LYASE-RELATED"/>
    <property type="match status" value="1"/>
</dbReference>
<dbReference type="PANTHER" id="PTHR30108:SF17">
    <property type="entry name" value="FERULIC ACID DECARBOXYLASE 1"/>
    <property type="match status" value="1"/>
</dbReference>
<dbReference type="Pfam" id="PF01977">
    <property type="entry name" value="UbiD"/>
    <property type="match status" value="1"/>
</dbReference>
<dbReference type="Pfam" id="PF20696">
    <property type="entry name" value="UbiD_C"/>
    <property type="match status" value="1"/>
</dbReference>
<dbReference type="Pfam" id="PF20695">
    <property type="entry name" value="UbiD_N"/>
    <property type="match status" value="1"/>
</dbReference>
<dbReference type="SUPFAM" id="SSF50475">
    <property type="entry name" value="FMN-binding split barrel"/>
    <property type="match status" value="1"/>
</dbReference>
<dbReference type="SUPFAM" id="SSF143968">
    <property type="entry name" value="UbiD C-terminal domain-like"/>
    <property type="match status" value="1"/>
</dbReference>